<keyword id="KW-0328">Glycosyltransferase</keyword>
<keyword id="KW-0472">Membrane</keyword>
<keyword id="KW-1185">Reference proteome</keyword>
<keyword id="KW-0808">Transferase</keyword>
<keyword id="KW-0812">Transmembrane</keyword>
<keyword id="KW-1133">Transmembrane helix</keyword>
<sequence>MVSETTKSSPLHFVLFPFMAQGHMIPMVDIARLLAQRGVIITIVTTPHNAARFKNVLNRAIESGLPINLVQVKFPYLEAGLQEGQENIDSLDTMERMIPFFKAVNFLEEPVQKLIEEMNPRPSCLISDFCLPYTSKIAKKFNIPKILFHGMGCFCLLCMHVLRKNREILDNLKSDKELFTVPDFPDRVEFTRTQVPVETYVPAGDWKDIFDGMVEANETSYGVIVNSFQELEPAYAKDYKEVRSGKAWTIGPVSLCNKVGADKAERGNKSDIDQDECLKWLDSKKHGSVLYVCLGSICNLPLSQLKELGLGLEESQRPFIWVIRGWEKYKELVEWFSESGFEDRIQDRGLLIKGWSPQMLILSHPSVGGFLTHCGWNSTLEGITAGLPLLTWPLFADQFCNEKLVVEVLKAGVRSGVEQPMKWGEEEKIGVLVDKEGVKKAVEELMGESDDAKERRRRAKELGDSAHKAVEEGGSSHSNISFLLQDIMELAEPNN</sequence>
<comment type="function">
    <text evidence="4 5 6 7">Specifically catalyzes 23-O-glucosylation of brassinosteroids, resulting probably in their inactivation. Also, involved in the O-glucosylation of trans-zeatin and dihydrozeatin. Active in vitro on cis-zeatin, dihydrozeatin-9-N-Glc, and olomoucine. Also involved in the detoxification of the Fusarium mycotoxin deoxynivalenol by the transfer of glucose from UDP-glucose to the hydroxyl group at C-3. Possesses low quercetin 7-O-glucosyltransferase and 4'-O-glucosyltransferase activities in vitro.</text>
</comment>
<comment type="subcellular location">
    <subcellularLocation>
        <location evidence="8">Membrane</location>
        <topology evidence="8">Single-pass membrane protein</topology>
    </subcellularLocation>
</comment>
<comment type="tissue specificity">
    <text evidence="4 7">Elongating hypocotyls and root-specific. Expressed in the vascular system, in meristematic tissues of the root tip, and in the vasculature of the hypocotyl right after germination. In late stage of flower development, expressed in petals, and in abscission zones.</text>
</comment>
<comment type="induction">
    <text evidence="4 5">Rapidly induced in response to deoxynivalenol exposure. Weak induction by salicylic acid, jasmonic acid and 1-aminocyclopropylcarbonic acid (ACC) treatments. Not induced by cytokinin treatment.</text>
</comment>
<comment type="similarity">
    <text evidence="8">Belongs to the UDP-glycosyltransferase family.</text>
</comment>
<evidence type="ECO:0000250" key="1"/>
<evidence type="ECO:0000255" key="2"/>
<evidence type="ECO:0000256" key="3">
    <source>
        <dbReference type="SAM" id="MobiDB-lite"/>
    </source>
</evidence>
<evidence type="ECO:0000269" key="4">
    <source>
    </source>
</evidence>
<evidence type="ECO:0000269" key="5">
    <source>
    </source>
</evidence>
<evidence type="ECO:0000269" key="6">
    <source>
    </source>
</evidence>
<evidence type="ECO:0000269" key="7">
    <source>
    </source>
</evidence>
<evidence type="ECO:0000305" key="8"/>
<accession>Q9ZQ94</accession>
<organism>
    <name type="scientific">Arabidopsis thaliana</name>
    <name type="common">Mouse-ear cress</name>
    <dbReference type="NCBI Taxonomy" id="3702"/>
    <lineage>
        <taxon>Eukaryota</taxon>
        <taxon>Viridiplantae</taxon>
        <taxon>Streptophyta</taxon>
        <taxon>Embryophyta</taxon>
        <taxon>Tracheophyta</taxon>
        <taxon>Spermatophyta</taxon>
        <taxon>Magnoliopsida</taxon>
        <taxon>eudicotyledons</taxon>
        <taxon>Gunneridae</taxon>
        <taxon>Pentapetalae</taxon>
        <taxon>rosids</taxon>
        <taxon>malvids</taxon>
        <taxon>Brassicales</taxon>
        <taxon>Brassicaceae</taxon>
        <taxon>Camelineae</taxon>
        <taxon>Arabidopsis</taxon>
    </lineage>
</organism>
<reference key="1">
    <citation type="submission" date="2004-03" db="EMBL/GenBank/DDBJ databases">
        <title>Arabidopsis genes encoding zeatin O-glucosyltransferases.</title>
        <authorList>
            <person name="Martin R.C."/>
            <person name="Mok M.C."/>
            <person name="Mok D.W.S."/>
        </authorList>
    </citation>
    <scope>NUCLEOTIDE SEQUENCE [GENOMIC DNA]</scope>
</reference>
<reference key="2">
    <citation type="journal article" date="1999" name="Nature">
        <title>Sequence and analysis of chromosome 2 of the plant Arabidopsis thaliana.</title>
        <authorList>
            <person name="Lin X."/>
            <person name="Kaul S."/>
            <person name="Rounsley S.D."/>
            <person name="Shea T.P."/>
            <person name="Benito M.-I."/>
            <person name="Town C.D."/>
            <person name="Fujii C.Y."/>
            <person name="Mason T.M."/>
            <person name="Bowman C.L."/>
            <person name="Barnstead M.E."/>
            <person name="Feldblyum T.V."/>
            <person name="Buell C.R."/>
            <person name="Ketchum K.A."/>
            <person name="Lee J.J."/>
            <person name="Ronning C.M."/>
            <person name="Koo H.L."/>
            <person name="Moffat K.S."/>
            <person name="Cronin L.A."/>
            <person name="Shen M."/>
            <person name="Pai G."/>
            <person name="Van Aken S."/>
            <person name="Umayam L."/>
            <person name="Tallon L.J."/>
            <person name="Gill J.E."/>
            <person name="Adams M.D."/>
            <person name="Carrera A.J."/>
            <person name="Creasy T.H."/>
            <person name="Goodman H.M."/>
            <person name="Somerville C.R."/>
            <person name="Copenhaver G.P."/>
            <person name="Preuss D."/>
            <person name="Nierman W.C."/>
            <person name="White O."/>
            <person name="Eisen J.A."/>
            <person name="Salzberg S.L."/>
            <person name="Fraser C.M."/>
            <person name="Venter J.C."/>
        </authorList>
    </citation>
    <scope>NUCLEOTIDE SEQUENCE [LARGE SCALE GENOMIC DNA]</scope>
    <source>
        <strain>cv. Columbia</strain>
    </source>
</reference>
<reference key="3">
    <citation type="journal article" date="2017" name="Plant J.">
        <title>Araport11: a complete reannotation of the Arabidopsis thaliana reference genome.</title>
        <authorList>
            <person name="Cheng C.Y."/>
            <person name="Krishnakumar V."/>
            <person name="Chan A.P."/>
            <person name="Thibaud-Nissen F."/>
            <person name="Schobel S."/>
            <person name="Town C.D."/>
        </authorList>
    </citation>
    <scope>GENOME REANNOTATION</scope>
    <source>
        <strain>cv. Columbia</strain>
    </source>
</reference>
<reference key="4">
    <citation type="journal article" date="2003" name="Science">
        <title>Empirical analysis of transcriptional activity in the Arabidopsis genome.</title>
        <authorList>
            <person name="Yamada K."/>
            <person name="Lim J."/>
            <person name="Dale J.M."/>
            <person name="Chen H."/>
            <person name="Shinn P."/>
            <person name="Palm C.J."/>
            <person name="Southwick A.M."/>
            <person name="Wu H.C."/>
            <person name="Kim C.J."/>
            <person name="Nguyen M."/>
            <person name="Pham P.K."/>
            <person name="Cheuk R.F."/>
            <person name="Karlin-Newmann G."/>
            <person name="Liu S.X."/>
            <person name="Lam B."/>
            <person name="Sakano H."/>
            <person name="Wu T."/>
            <person name="Yu G."/>
            <person name="Miranda M."/>
            <person name="Quach H.L."/>
            <person name="Tripp M."/>
            <person name="Chang C.H."/>
            <person name="Lee J.M."/>
            <person name="Toriumi M.J."/>
            <person name="Chan M.M."/>
            <person name="Tang C.C."/>
            <person name="Onodera C.S."/>
            <person name="Deng J.M."/>
            <person name="Akiyama K."/>
            <person name="Ansari Y."/>
            <person name="Arakawa T."/>
            <person name="Banh J."/>
            <person name="Banno F."/>
            <person name="Bowser L."/>
            <person name="Brooks S.Y."/>
            <person name="Carninci P."/>
            <person name="Chao Q."/>
            <person name="Choy N."/>
            <person name="Enju A."/>
            <person name="Goldsmith A.D."/>
            <person name="Gurjal M."/>
            <person name="Hansen N.F."/>
            <person name="Hayashizaki Y."/>
            <person name="Johnson-Hopson C."/>
            <person name="Hsuan V.W."/>
            <person name="Iida K."/>
            <person name="Karnes M."/>
            <person name="Khan S."/>
            <person name="Koesema E."/>
            <person name="Ishida J."/>
            <person name="Jiang P.X."/>
            <person name="Jones T."/>
            <person name="Kawai J."/>
            <person name="Kamiya A."/>
            <person name="Meyers C."/>
            <person name="Nakajima M."/>
            <person name="Narusaka M."/>
            <person name="Seki M."/>
            <person name="Sakurai T."/>
            <person name="Satou M."/>
            <person name="Tamse R."/>
            <person name="Vaysberg M."/>
            <person name="Wallender E.K."/>
            <person name="Wong C."/>
            <person name="Yamamura Y."/>
            <person name="Yuan S."/>
            <person name="Shinozaki K."/>
            <person name="Davis R.W."/>
            <person name="Theologis A."/>
            <person name="Ecker J.R."/>
        </authorList>
    </citation>
    <scope>NUCLEOTIDE SEQUENCE [LARGE SCALE MRNA]</scope>
    <source>
        <strain>cv. Columbia</strain>
    </source>
</reference>
<reference key="5">
    <citation type="journal article" date="2001" name="J. Biol. Chem.">
        <title>Phylogenetic analysis of the UDP-glycosyltransferase multigene family of Arabidopsis thaliana.</title>
        <authorList>
            <person name="Li Y."/>
            <person name="Baldauf S."/>
            <person name="Lim E.K."/>
            <person name="Bowles D.J."/>
        </authorList>
    </citation>
    <scope>GENE FAMILY</scope>
</reference>
<reference key="6">
    <citation type="journal article" date="2003" name="J. Biol. Chem.">
        <title>Detoxification of the Fusarium mycotoxin deoxynivalenol by a UDP-glucosyltransferase from Arabidopsis thaliana.</title>
        <authorList>
            <person name="Poppenberger B."/>
            <person name="Berthiller F."/>
            <person name="Lucyshyn D."/>
            <person name="Sieberer T."/>
            <person name="Schuhmacher R."/>
            <person name="Krska R."/>
            <person name="Kuchler K."/>
            <person name="Gloessl J."/>
            <person name="Luschnig C."/>
            <person name="Adam G."/>
        </authorList>
    </citation>
    <scope>FUNCTION</scope>
    <scope>INDUCTION</scope>
    <scope>TISSUE SPECIFICITY</scope>
</reference>
<reference key="7">
    <citation type="journal article" date="2004" name="Biotechnol. Bioeng.">
        <title>Arabidopsis glycosyltransferases as biocatalysts in fermentation for regioselective synthesis of diverse quercetin glucosides.</title>
        <authorList>
            <person name="Lim E.K."/>
            <person name="Ashford D.A."/>
            <person name="Hou B."/>
            <person name="Jackson R.G."/>
            <person name="Bowles D.J."/>
        </authorList>
    </citation>
    <scope>FUNCTION</scope>
</reference>
<reference key="8">
    <citation type="journal article" date="2004" name="EMBO J.">
        <title>A class of plant glycosyltransferases involved in cellular homeostasis.</title>
        <authorList>
            <person name="Lim E.K."/>
            <person name="Bowles D.J."/>
        </authorList>
    </citation>
    <scope>CLASSIFICATION</scope>
    <scope>NOMENCLATURE</scope>
</reference>
<reference key="9">
    <citation type="journal article" date="2004" name="J. Biol. Chem.">
        <title>N-glucosylation of cytokinins by glycosyltransferases of Arabidopsis thaliana.</title>
        <authorList>
            <person name="Hou B."/>
            <person name="Lim E.-K."/>
            <person name="Higgins G.S."/>
            <person name="Bowles D.J."/>
        </authorList>
    </citation>
    <scope>FUNCTION</scope>
    <scope>INDUCTION</scope>
</reference>
<reference key="10">
    <citation type="journal article" date="2005" name="Proc. Natl. Acad. Sci. U.S.A.">
        <title>The UGT73C5 of Arabidopsis thaliana glucosylates brassinosteroids.</title>
        <authorList>
            <person name="Poppenberger B."/>
            <person name="Fujioka S."/>
            <person name="Soeno K."/>
            <person name="George G.L."/>
            <person name="Vaistij F.E."/>
            <person name="Hiranuma S."/>
            <person name="Seto H."/>
            <person name="Takatsuto S."/>
            <person name="Adam G."/>
            <person name="Yoshida S."/>
            <person name="Bowles D."/>
        </authorList>
    </citation>
    <scope>FUNCTION</scope>
    <scope>TISSUE SPECIFICITY</scope>
</reference>
<protein>
    <recommendedName>
        <fullName>UDP-glycosyltransferase 73C5</fullName>
        <ecNumber>2.4.1.-</ecNumber>
    </recommendedName>
    <alternativeName>
        <fullName>Cytokinin-O-glucosyltransferase 3</fullName>
    </alternativeName>
    <alternativeName>
        <fullName>Deoxynivalenol-glucosyl-transferase 1</fullName>
    </alternativeName>
    <alternativeName>
        <fullName>Zeatin O-glucosyltransferase 3</fullName>
        <shortName>AtZOG3</shortName>
    </alternativeName>
</protein>
<dbReference type="EC" id="2.4.1.-"/>
<dbReference type="EMBL" id="AY573822">
    <property type="protein sequence ID" value="AAS87592.1"/>
    <property type="molecule type" value="Genomic_DNA"/>
</dbReference>
<dbReference type="EMBL" id="AC006282">
    <property type="protein sequence ID" value="AAD20156.1"/>
    <property type="molecule type" value="Genomic_DNA"/>
</dbReference>
<dbReference type="EMBL" id="CP002685">
    <property type="protein sequence ID" value="AEC09299.1"/>
    <property type="molecule type" value="Genomic_DNA"/>
</dbReference>
<dbReference type="EMBL" id="AY062743">
    <property type="protein sequence ID" value="AAL32821.1"/>
    <property type="molecule type" value="mRNA"/>
</dbReference>
<dbReference type="EMBL" id="BT003373">
    <property type="protein sequence ID" value="AAO30036.1"/>
    <property type="molecule type" value="mRNA"/>
</dbReference>
<dbReference type="PIR" id="H84784">
    <property type="entry name" value="H84784"/>
</dbReference>
<dbReference type="RefSeq" id="NP_181218.1">
    <property type="nucleotide sequence ID" value="NM_129235.4"/>
</dbReference>
<dbReference type="SMR" id="Q9ZQ94"/>
<dbReference type="FunCoup" id="Q9ZQ94">
    <property type="interactions" value="196"/>
</dbReference>
<dbReference type="STRING" id="3702.Q9ZQ94"/>
<dbReference type="CAZy" id="GT1">
    <property type="family name" value="Glycosyltransferase Family 1"/>
</dbReference>
<dbReference type="iPTMnet" id="Q9ZQ94"/>
<dbReference type="PaxDb" id="3702-AT2G36800.1"/>
<dbReference type="ProteomicsDB" id="243204"/>
<dbReference type="EnsemblPlants" id="AT2G36800.1">
    <property type="protein sequence ID" value="AT2G36800.1"/>
    <property type="gene ID" value="AT2G36800"/>
</dbReference>
<dbReference type="GeneID" id="818252"/>
<dbReference type="Gramene" id="AT2G36800.1">
    <property type="protein sequence ID" value="AT2G36800.1"/>
    <property type="gene ID" value="AT2G36800"/>
</dbReference>
<dbReference type="KEGG" id="ath:AT2G36800"/>
<dbReference type="Araport" id="AT2G36800"/>
<dbReference type="TAIR" id="AT2G36800">
    <property type="gene designation" value="DOGT1"/>
</dbReference>
<dbReference type="eggNOG" id="KOG1192">
    <property type="taxonomic scope" value="Eukaryota"/>
</dbReference>
<dbReference type="HOGENOM" id="CLU_001724_2_2_1"/>
<dbReference type="InParanoid" id="Q9ZQ94"/>
<dbReference type="OMA" id="CMHILRK"/>
<dbReference type="OrthoDB" id="5835829at2759"/>
<dbReference type="PhylomeDB" id="Q9ZQ94"/>
<dbReference type="BioCyc" id="ARA:AT2G36800-MONOMER"/>
<dbReference type="BioCyc" id="MetaCyc:AT2G36800-MONOMER"/>
<dbReference type="BRENDA" id="2.4.1.203">
    <property type="organism ID" value="399"/>
</dbReference>
<dbReference type="PRO" id="PR:Q9ZQ94"/>
<dbReference type="Proteomes" id="UP000006548">
    <property type="component" value="Chromosome 2"/>
</dbReference>
<dbReference type="ExpressionAtlas" id="Q9ZQ94">
    <property type="expression patterns" value="baseline and differential"/>
</dbReference>
<dbReference type="GO" id="GO:0005783">
    <property type="term" value="C:endoplasmic reticulum"/>
    <property type="evidence" value="ECO:0007005"/>
    <property type="project" value="TAIR"/>
</dbReference>
<dbReference type="GO" id="GO:0016020">
    <property type="term" value="C:membrane"/>
    <property type="evidence" value="ECO:0007669"/>
    <property type="project" value="UniProtKB-SubCell"/>
</dbReference>
<dbReference type="GO" id="GO:0050502">
    <property type="term" value="F:cis-zeatin O-beta-D-glucosyltransferase activity"/>
    <property type="evidence" value="ECO:0000314"/>
    <property type="project" value="TAIR"/>
</dbReference>
<dbReference type="GO" id="GO:0046527">
    <property type="term" value="F:glucosyltransferase activity"/>
    <property type="evidence" value="ECO:0000314"/>
    <property type="project" value="TAIR"/>
</dbReference>
<dbReference type="GO" id="GO:0080046">
    <property type="term" value="F:quercetin 4'-O-glucosyltransferase activity"/>
    <property type="evidence" value="ECO:0000314"/>
    <property type="project" value="TAIR"/>
</dbReference>
<dbReference type="GO" id="GO:0080044">
    <property type="term" value="F:quercetin 7-O-glucosyltransferase activity"/>
    <property type="evidence" value="ECO:0000314"/>
    <property type="project" value="TAIR"/>
</dbReference>
<dbReference type="GO" id="GO:0050403">
    <property type="term" value="F:trans-zeatin O-beta-D-glucosyltransferase activity"/>
    <property type="evidence" value="ECO:0000314"/>
    <property type="project" value="TAIR"/>
</dbReference>
<dbReference type="GO" id="GO:0008194">
    <property type="term" value="F:UDP-glycosyltransferase activity"/>
    <property type="evidence" value="ECO:0000314"/>
    <property type="project" value="UniProtKB"/>
</dbReference>
<dbReference type="GO" id="GO:0016131">
    <property type="term" value="P:brassinosteroid metabolic process"/>
    <property type="evidence" value="ECO:0000314"/>
    <property type="project" value="TAIR"/>
</dbReference>
<dbReference type="GO" id="GO:0071456">
    <property type="term" value="P:cellular response to hypoxia"/>
    <property type="evidence" value="ECO:0007007"/>
    <property type="project" value="TAIR"/>
</dbReference>
<dbReference type="GO" id="GO:0098754">
    <property type="term" value="P:detoxification"/>
    <property type="evidence" value="ECO:0000314"/>
    <property type="project" value="UniProtKB"/>
</dbReference>
<dbReference type="CDD" id="cd03784">
    <property type="entry name" value="GT1_Gtf-like"/>
    <property type="match status" value="1"/>
</dbReference>
<dbReference type="FunFam" id="3.40.50.2000:FF:000047">
    <property type="entry name" value="Glycosyltransferase"/>
    <property type="match status" value="1"/>
</dbReference>
<dbReference type="FunFam" id="3.40.50.2000:FF:000071">
    <property type="entry name" value="Glycosyltransferase"/>
    <property type="match status" value="1"/>
</dbReference>
<dbReference type="Gene3D" id="3.40.50.2000">
    <property type="entry name" value="Glycogen Phosphorylase B"/>
    <property type="match status" value="2"/>
</dbReference>
<dbReference type="InterPro" id="IPR002213">
    <property type="entry name" value="UDP_glucos_trans"/>
</dbReference>
<dbReference type="InterPro" id="IPR035595">
    <property type="entry name" value="UDP_glycos_trans_CS"/>
</dbReference>
<dbReference type="PANTHER" id="PTHR48047">
    <property type="entry name" value="GLYCOSYLTRANSFERASE"/>
    <property type="match status" value="1"/>
</dbReference>
<dbReference type="PANTHER" id="PTHR48047:SF153">
    <property type="entry name" value="UDP-GLYCOSYLTRANSFERASE 73C5-RELATED"/>
    <property type="match status" value="1"/>
</dbReference>
<dbReference type="Pfam" id="PF00201">
    <property type="entry name" value="UDPGT"/>
    <property type="match status" value="1"/>
</dbReference>
<dbReference type="SUPFAM" id="SSF53756">
    <property type="entry name" value="UDP-Glycosyltransferase/glycogen phosphorylase"/>
    <property type="match status" value="1"/>
</dbReference>
<dbReference type="PROSITE" id="PS00375">
    <property type="entry name" value="UDPGT"/>
    <property type="match status" value="1"/>
</dbReference>
<gene>
    <name type="primary">UGT73C5</name>
    <name type="synonym">DOGT1</name>
    <name type="synonym">ZOG3</name>
    <name type="ordered locus">At2g36800</name>
    <name type="ORF">F13K3.20</name>
</gene>
<proteinExistence type="evidence at transcript level"/>
<feature type="chain" id="PRO_0000074157" description="UDP-glycosyltransferase 73C5">
    <location>
        <begin position="1"/>
        <end position="495"/>
    </location>
</feature>
<feature type="transmembrane region" description="Helical" evidence="2">
    <location>
        <begin position="146"/>
        <end position="162"/>
    </location>
</feature>
<feature type="region of interest" description="Disordered" evidence="3">
    <location>
        <begin position="446"/>
        <end position="477"/>
    </location>
</feature>
<feature type="compositionally biased region" description="Basic and acidic residues" evidence="3">
    <location>
        <begin position="450"/>
        <end position="471"/>
    </location>
</feature>
<feature type="binding site" evidence="1">
    <location>
        <position position="296"/>
    </location>
    <ligand>
        <name>UDP-alpha-D-glucose</name>
        <dbReference type="ChEBI" id="CHEBI:58885"/>
    </ligand>
</feature>
<feature type="binding site" evidence="1">
    <location>
        <begin position="356"/>
        <end position="358"/>
    </location>
    <ligand>
        <name>UDP-alpha-D-glucose</name>
        <dbReference type="ChEBI" id="CHEBI:58885"/>
    </ligand>
</feature>
<feature type="binding site" evidence="1">
    <location>
        <begin position="373"/>
        <end position="381"/>
    </location>
    <ligand>
        <name>UDP-alpha-D-glucose</name>
        <dbReference type="ChEBI" id="CHEBI:58885"/>
    </ligand>
</feature>
<feature type="binding site" evidence="1">
    <location>
        <begin position="395"/>
        <end position="398"/>
    </location>
    <ligand>
        <name>UDP-alpha-D-glucose</name>
        <dbReference type="ChEBI" id="CHEBI:58885"/>
    </ligand>
</feature>
<name>U73C5_ARATH</name>